<name>SC6A8_BOVIN</name>
<feature type="chain" id="PRO_0000214773" description="Sodium- and chloride-dependent creatine transporter 1">
    <location>
        <begin position="1"/>
        <end position="635"/>
    </location>
</feature>
<feature type="topological domain" description="Cytoplasmic" evidence="3">
    <location>
        <begin position="1"/>
        <end position="60"/>
    </location>
</feature>
<feature type="transmembrane region" description="Helical" evidence="3">
    <location>
        <begin position="61"/>
        <end position="81"/>
    </location>
</feature>
<feature type="topological domain" description="Extracellular" evidence="3">
    <location>
        <begin position="82"/>
        <end position="87"/>
    </location>
</feature>
<feature type="transmembrane region" description="Helical" evidence="3">
    <location>
        <begin position="88"/>
        <end position="108"/>
    </location>
</feature>
<feature type="topological domain" description="Cytoplasmic" evidence="3">
    <location>
        <begin position="109"/>
        <end position="138"/>
    </location>
</feature>
<feature type="transmembrane region" description="Helical" evidence="3">
    <location>
        <begin position="139"/>
        <end position="159"/>
    </location>
</feature>
<feature type="topological domain" description="Extracellular" evidence="3">
    <location>
        <begin position="160"/>
        <end position="230"/>
    </location>
</feature>
<feature type="transmembrane region" description="Helical" evidence="3">
    <location>
        <begin position="231"/>
        <end position="251"/>
    </location>
</feature>
<feature type="topological domain" description="Cytoplasmic" evidence="3">
    <location>
        <begin position="252"/>
        <end position="269"/>
    </location>
</feature>
<feature type="transmembrane region" description="Helical" evidence="3">
    <location>
        <begin position="270"/>
        <end position="290"/>
    </location>
</feature>
<feature type="topological domain" description="Extracellular" evidence="3">
    <location>
        <begin position="291"/>
        <end position="304"/>
    </location>
</feature>
<feature type="transmembrane region" description="Helical" evidence="3">
    <location>
        <begin position="305"/>
        <end position="325"/>
    </location>
</feature>
<feature type="topological domain" description="Cytoplasmic" evidence="3">
    <location>
        <begin position="326"/>
        <end position="341"/>
    </location>
</feature>
<feature type="transmembrane region" description="Helical" evidence="3">
    <location>
        <begin position="342"/>
        <end position="362"/>
    </location>
</feature>
<feature type="topological domain" description="Extracellular" evidence="3">
    <location>
        <begin position="363"/>
        <end position="394"/>
    </location>
</feature>
<feature type="transmembrane region" description="Helical" evidence="3">
    <location>
        <begin position="395"/>
        <end position="415"/>
    </location>
</feature>
<feature type="topological domain" description="Cytoplasmic" evidence="3">
    <location>
        <begin position="416"/>
        <end position="444"/>
    </location>
</feature>
<feature type="transmembrane region" description="Helical" evidence="3">
    <location>
        <begin position="445"/>
        <end position="465"/>
    </location>
</feature>
<feature type="topological domain" description="Extracellular" evidence="3">
    <location>
        <begin position="466"/>
        <end position="479"/>
    </location>
</feature>
<feature type="transmembrane region" description="Helical" evidence="3">
    <location>
        <begin position="480"/>
        <end position="500"/>
    </location>
</feature>
<feature type="topological domain" description="Cytoplasmic" evidence="3">
    <location>
        <begin position="501"/>
        <end position="520"/>
    </location>
</feature>
<feature type="transmembrane region" description="Helical" evidence="3">
    <location>
        <begin position="521"/>
        <end position="541"/>
    </location>
</feature>
<feature type="topological domain" description="Extracellular" evidence="3">
    <location>
        <begin position="542"/>
        <end position="560"/>
    </location>
</feature>
<feature type="transmembrane region" description="Helical" evidence="3">
    <location>
        <begin position="561"/>
        <end position="581"/>
    </location>
</feature>
<feature type="topological domain" description="Cytoplasmic" evidence="3">
    <location>
        <begin position="582"/>
        <end position="635"/>
    </location>
</feature>
<feature type="region of interest" description="Disordered" evidence="4">
    <location>
        <begin position="1"/>
        <end position="27"/>
    </location>
</feature>
<feature type="compositionally biased region" description="Polar residues" evidence="4">
    <location>
        <begin position="1"/>
        <end position="11"/>
    </location>
</feature>
<feature type="modified residue" description="Phosphothreonine" evidence="1">
    <location>
        <position position="617"/>
    </location>
</feature>
<feature type="modified residue" description="Phosphothreonine" evidence="1">
    <location>
        <position position="620"/>
    </location>
</feature>
<feature type="modified residue" description="Phosphoserine" evidence="2">
    <location>
        <position position="623"/>
    </location>
</feature>
<feature type="glycosylation site" description="N-linked (GlcNAc...) asparagine" evidence="3">
    <location>
        <position position="192"/>
    </location>
</feature>
<feature type="glycosylation site" description="N-linked (GlcNAc...) asparagine" evidence="3">
    <location>
        <position position="197"/>
    </location>
</feature>
<feature type="glycosylation site" description="N-linked (GlcNAc...) asparagine" evidence="3">
    <location>
        <position position="548"/>
    </location>
</feature>
<gene>
    <name type="primary">SLC6A8</name>
</gene>
<evidence type="ECO:0000250" key="1">
    <source>
        <dbReference type="UniProtKB" id="P48029"/>
    </source>
</evidence>
<evidence type="ECO:0000250" key="2">
    <source>
        <dbReference type="UniProtKB" id="Q8VBW1"/>
    </source>
</evidence>
<evidence type="ECO:0000255" key="3"/>
<evidence type="ECO:0000256" key="4">
    <source>
        <dbReference type="SAM" id="MobiDB-lite"/>
    </source>
</evidence>
<evidence type="ECO:0000305" key="5"/>
<proteinExistence type="evidence at transcript level"/>
<reference key="1">
    <citation type="submission" date="1997-11" db="EMBL/GenBank/DDBJ databases">
        <authorList>
            <person name="Christie D.L."/>
            <person name="Zheng T."/>
            <person name="Kippenberger A.G."/>
            <person name="Dodd J.R."/>
            <person name="Burton L.D."/>
        </authorList>
    </citation>
    <scope>NUCLEOTIDE SEQUENCE [MRNA]</scope>
    <source>
        <tissue>Adrenal medulla</tissue>
    </source>
</reference>
<organism>
    <name type="scientific">Bos taurus</name>
    <name type="common">Bovine</name>
    <dbReference type="NCBI Taxonomy" id="9913"/>
    <lineage>
        <taxon>Eukaryota</taxon>
        <taxon>Metazoa</taxon>
        <taxon>Chordata</taxon>
        <taxon>Craniata</taxon>
        <taxon>Vertebrata</taxon>
        <taxon>Euteleostomi</taxon>
        <taxon>Mammalia</taxon>
        <taxon>Eutheria</taxon>
        <taxon>Laurasiatheria</taxon>
        <taxon>Artiodactyla</taxon>
        <taxon>Ruminantia</taxon>
        <taxon>Pecora</taxon>
        <taxon>Bovidae</taxon>
        <taxon>Bovinae</taxon>
        <taxon>Bos</taxon>
    </lineage>
</organism>
<protein>
    <recommendedName>
        <fullName>Sodium- and chloride-dependent creatine transporter 1</fullName>
        <shortName>CT1</shortName>
        <shortName>Creatine transporter 1</shortName>
    </recommendedName>
    <alternativeName>
        <fullName>Solute carrier family 6 member 8</fullName>
    </alternativeName>
</protein>
<accession>O18875</accession>
<sequence length="635" mass="70676">MANKSTENGIYSVSGEEKKGPLIAPGPDGAPAKGDGPAALGAPGSLLAVPPRETWTRQMDFIMSCVGFAVGLGNVWRFPYLCYKNGGGVFLIPYILIALIGGIPIFFLEISLGQFMKAGSINVWNICPLFKGLGYASMVIVFYCNTYYIMVLAWGFYYLVKSFTTTLPWATCGHTWNTPDCVEIFRHEDCANATMANLTCDQLADRRSPVIEFWENKVLRLSEGLEVPGALNWEVTLCLLTCWVLVYFCVWKGVKSTGKIVYFTATFPYVVLVVLLVRGVLLPGALDGIIYYLKPDWSKLASPQVWIDAGTQIFFSYAIGLGALTALGSYNRFNNNCYKDAIILALINSGTSFFAGFVVFSILGFMATEQGVHISKVAESGPGLAFIAYPRAVTLMPVAPLWAALFFFMLLLLGLDSQFVGVEGFITGLLDLLPASYYFRFQREISVALCCTICFVIDLSMVTDGGMYVFQLFDYYSASGTTLLWQAFWECVVVAWVYGADRFMDDVACMIGYRPCPWMKWCWSFFTPLVCMGIFIFNVVYHEPLVYNNTYVYPWWGEAVGWAFALSSMLCVPLHLLGCLLRAKGTMAERWQHLTQPIWGLHHLEYRAQDSDVRGLTTLTPVSESSKVVVVESVM</sequence>
<keyword id="KW-1003">Cell membrane</keyword>
<keyword id="KW-0325">Glycoprotein</keyword>
<keyword id="KW-0406">Ion transport</keyword>
<keyword id="KW-0472">Membrane</keyword>
<keyword id="KW-0597">Phosphoprotein</keyword>
<keyword id="KW-1185">Reference proteome</keyword>
<keyword id="KW-0915">Sodium</keyword>
<keyword id="KW-0739">Sodium transport</keyword>
<keyword id="KW-0769">Symport</keyword>
<keyword id="KW-0812">Transmembrane</keyword>
<keyword id="KW-1133">Transmembrane helix</keyword>
<keyword id="KW-0813">Transport</keyword>
<comment type="function">
    <text evidence="1 2">Creatine:sodium symporter which mediates the uptake of creatine (By similarity). Plays an important role in supplying creatine to the brain via the blood-brain barrier (By similarity).</text>
</comment>
<comment type="catalytic activity">
    <reaction evidence="1">
        <text>creatine(out) + chloride(out) + 2 Na(+)(out) = creatine(in) + chloride(in) + 2 Na(+)(in)</text>
        <dbReference type="Rhea" id="RHEA:71831"/>
        <dbReference type="ChEBI" id="CHEBI:17996"/>
        <dbReference type="ChEBI" id="CHEBI:29101"/>
        <dbReference type="ChEBI" id="CHEBI:57947"/>
    </reaction>
</comment>
<comment type="subcellular location">
    <subcellularLocation>
        <location evidence="1">Cell membrane</location>
        <topology evidence="3">Multi-pass membrane protein</topology>
    </subcellularLocation>
    <subcellularLocation>
        <location evidence="1">Apical cell membrane</location>
        <topology evidence="3">Multi-pass membrane protein</topology>
    </subcellularLocation>
</comment>
<comment type="PTM">
    <text evidence="2">Glycosylated.</text>
</comment>
<comment type="similarity">
    <text evidence="5">Belongs to the sodium:neurotransmitter symporter (SNF) (TC 2.A.22) family. SLC6A8 subfamily.</text>
</comment>
<dbReference type="EMBL" id="AF027197">
    <property type="protein sequence ID" value="AAB84029.1"/>
    <property type="molecule type" value="mRNA"/>
</dbReference>
<dbReference type="RefSeq" id="NP_777036.1">
    <property type="nucleotide sequence ID" value="NM_174611.2"/>
</dbReference>
<dbReference type="SMR" id="O18875"/>
<dbReference type="FunCoup" id="O18875">
    <property type="interactions" value="55"/>
</dbReference>
<dbReference type="STRING" id="9913.ENSBTAP00000013141"/>
<dbReference type="GlyCosmos" id="O18875">
    <property type="glycosylation" value="3 sites, No reported glycans"/>
</dbReference>
<dbReference type="GlyGen" id="O18875">
    <property type="glycosylation" value="3 sites"/>
</dbReference>
<dbReference type="PaxDb" id="9913-ENSBTAP00000013141"/>
<dbReference type="Ensembl" id="ENSBTAT00000013141.6">
    <property type="protein sequence ID" value="ENSBTAP00000013141.6"/>
    <property type="gene ID" value="ENSBTAG00000009959.7"/>
</dbReference>
<dbReference type="GeneID" id="282367"/>
<dbReference type="KEGG" id="bta:282367"/>
<dbReference type="CTD" id="6535"/>
<dbReference type="VEuPathDB" id="HostDB:ENSBTAG00000009959"/>
<dbReference type="VGNC" id="VGNC:112677">
    <property type="gene designation" value="SLC6A8"/>
</dbReference>
<dbReference type="eggNOG" id="KOG3660">
    <property type="taxonomic scope" value="Eukaryota"/>
</dbReference>
<dbReference type="GeneTree" id="ENSGT00940000155869"/>
<dbReference type="HOGENOM" id="CLU_006855_9_5_1"/>
<dbReference type="InParanoid" id="O18875"/>
<dbReference type="OMA" id="CVEIFRQ"/>
<dbReference type="OrthoDB" id="6581954at2759"/>
<dbReference type="Reactome" id="R-BTA-71288">
    <property type="pathway name" value="Creatine metabolism"/>
</dbReference>
<dbReference type="Proteomes" id="UP000009136">
    <property type="component" value="Chromosome X"/>
</dbReference>
<dbReference type="Bgee" id="ENSBTAG00000009959">
    <property type="expression patterns" value="Expressed in infraspinatus muscle and 102 other cell types or tissues"/>
</dbReference>
<dbReference type="GO" id="GO:0016324">
    <property type="term" value="C:apical plasma membrane"/>
    <property type="evidence" value="ECO:0007669"/>
    <property type="project" value="UniProtKB-SubCell"/>
</dbReference>
<dbReference type="GO" id="GO:0005886">
    <property type="term" value="C:plasma membrane"/>
    <property type="evidence" value="ECO:0000318"/>
    <property type="project" value="GO_Central"/>
</dbReference>
<dbReference type="GO" id="GO:0005309">
    <property type="term" value="F:creatine:sodium symporter activity"/>
    <property type="evidence" value="ECO:0007669"/>
    <property type="project" value="InterPro"/>
</dbReference>
<dbReference type="GO" id="GO:0005332">
    <property type="term" value="F:gamma-aminobutyric acid:sodium:chloride symporter activity"/>
    <property type="evidence" value="ECO:0000318"/>
    <property type="project" value="GO_Central"/>
</dbReference>
<dbReference type="GO" id="GO:0006865">
    <property type="term" value="P:amino acid transport"/>
    <property type="evidence" value="ECO:0000318"/>
    <property type="project" value="GO_Central"/>
</dbReference>
<dbReference type="GO" id="GO:0015881">
    <property type="term" value="P:creatine transmembrane transport"/>
    <property type="evidence" value="ECO:0000250"/>
    <property type="project" value="UniProtKB"/>
</dbReference>
<dbReference type="GO" id="GO:0006836">
    <property type="term" value="P:neurotransmitter transport"/>
    <property type="evidence" value="ECO:0007669"/>
    <property type="project" value="InterPro"/>
</dbReference>
<dbReference type="GO" id="GO:0035725">
    <property type="term" value="P:sodium ion transmembrane transport"/>
    <property type="evidence" value="ECO:0000318"/>
    <property type="project" value="GO_Central"/>
</dbReference>
<dbReference type="CDD" id="cd11509">
    <property type="entry name" value="SLC6sbd_CT1"/>
    <property type="match status" value="1"/>
</dbReference>
<dbReference type="InterPro" id="IPR000175">
    <property type="entry name" value="Na/ntran_symport"/>
</dbReference>
<dbReference type="InterPro" id="IPR002984">
    <property type="entry name" value="Na/ntran_symport_creatine"/>
</dbReference>
<dbReference type="InterPro" id="IPR037272">
    <property type="entry name" value="SNS_sf"/>
</dbReference>
<dbReference type="PANTHER" id="PTHR11616:SF96">
    <property type="entry name" value="SODIUM- AND CHLORIDE-DEPENDENT CREATINE TRANSPORTER 1"/>
    <property type="match status" value="1"/>
</dbReference>
<dbReference type="PANTHER" id="PTHR11616">
    <property type="entry name" value="SODIUM/CHLORIDE DEPENDENT TRANSPORTER"/>
    <property type="match status" value="1"/>
</dbReference>
<dbReference type="Pfam" id="PF00209">
    <property type="entry name" value="SNF"/>
    <property type="match status" value="1"/>
</dbReference>
<dbReference type="PRINTS" id="PR01199">
    <property type="entry name" value="CRTTRANSPORT"/>
</dbReference>
<dbReference type="PRINTS" id="PR00176">
    <property type="entry name" value="NANEUSMPORT"/>
</dbReference>
<dbReference type="SUPFAM" id="SSF161070">
    <property type="entry name" value="SNF-like"/>
    <property type="match status" value="1"/>
</dbReference>
<dbReference type="PROSITE" id="PS00610">
    <property type="entry name" value="NA_NEUROTRAN_SYMP_1"/>
    <property type="match status" value="1"/>
</dbReference>
<dbReference type="PROSITE" id="PS00754">
    <property type="entry name" value="NA_NEUROTRAN_SYMP_2"/>
    <property type="match status" value="1"/>
</dbReference>
<dbReference type="PROSITE" id="PS50267">
    <property type="entry name" value="NA_NEUROTRAN_SYMP_3"/>
    <property type="match status" value="1"/>
</dbReference>